<keyword id="KW-0058">Aromatic hydrocarbons catabolism</keyword>
<keyword id="KW-0997">Cell inner membrane</keyword>
<keyword id="KW-1003">Cell membrane</keyword>
<keyword id="KW-0408">Iron</keyword>
<keyword id="KW-0472">Membrane</keyword>
<keyword id="KW-0479">Metal-binding</keyword>
<keyword id="KW-0503">Monooxygenase</keyword>
<keyword id="KW-0560">Oxidoreductase</keyword>
<keyword id="KW-0614">Plasmid</keyword>
<keyword id="KW-0812">Transmembrane</keyword>
<keyword id="KW-1133">Transmembrane helix</keyword>
<dbReference type="EC" id="1.14.15.26" evidence="5"/>
<dbReference type="EMBL" id="M37480">
    <property type="protein sequence ID" value="AAA26026.1"/>
    <property type="molecule type" value="Genomic_DNA"/>
</dbReference>
<dbReference type="EMBL" id="D63341">
    <property type="protein sequence ID" value="BAA09662.1"/>
    <property type="molecule type" value="Genomic_DNA"/>
</dbReference>
<dbReference type="PIR" id="A37316">
    <property type="entry name" value="A37316"/>
</dbReference>
<dbReference type="RefSeq" id="NP_542887.1">
    <property type="nucleotide sequence ID" value="NC_003350.1"/>
</dbReference>
<dbReference type="RefSeq" id="WP_011005930.1">
    <property type="nucleotide sequence ID" value="NZ_LT852425.1"/>
</dbReference>
<dbReference type="SMR" id="P21395"/>
<dbReference type="KEGG" id="ag:AAA26026"/>
<dbReference type="BioCyc" id="MetaCyc:MONOMER-2942"/>
<dbReference type="BRENDA" id="1.14.15.26">
    <property type="organism ID" value="5092"/>
</dbReference>
<dbReference type="GO" id="GO:0005886">
    <property type="term" value="C:plasma membrane"/>
    <property type="evidence" value="ECO:0007669"/>
    <property type="project" value="UniProtKB-SubCell"/>
</dbReference>
<dbReference type="GO" id="GO:0046872">
    <property type="term" value="F:metal ion binding"/>
    <property type="evidence" value="ECO:0007669"/>
    <property type="project" value="UniProtKB-KW"/>
</dbReference>
<dbReference type="GO" id="GO:0004497">
    <property type="term" value="F:monooxygenase activity"/>
    <property type="evidence" value="ECO:0007669"/>
    <property type="project" value="UniProtKB-KW"/>
</dbReference>
<dbReference type="GO" id="GO:0009056">
    <property type="term" value="P:catabolic process"/>
    <property type="evidence" value="ECO:0007669"/>
    <property type="project" value="UniProtKB-KW"/>
</dbReference>
<dbReference type="GO" id="GO:0006629">
    <property type="term" value="P:lipid metabolic process"/>
    <property type="evidence" value="ECO:0007669"/>
    <property type="project" value="InterPro"/>
</dbReference>
<dbReference type="CDD" id="cd03512">
    <property type="entry name" value="Alkane-hydroxylase"/>
    <property type="match status" value="1"/>
</dbReference>
<dbReference type="InterPro" id="IPR033885">
    <property type="entry name" value="AlkB/XylM"/>
</dbReference>
<dbReference type="InterPro" id="IPR005804">
    <property type="entry name" value="FA_desaturase_dom"/>
</dbReference>
<dbReference type="PANTHER" id="PTHR38674">
    <property type="entry name" value="ALKANE 1-MONOOXYGENASE 1"/>
    <property type="match status" value="1"/>
</dbReference>
<dbReference type="PANTHER" id="PTHR38674:SF1">
    <property type="entry name" value="ALKANE 1-MONOOXYGENASE 1"/>
    <property type="match status" value="1"/>
</dbReference>
<dbReference type="Pfam" id="PF00487">
    <property type="entry name" value="FA_desaturase"/>
    <property type="match status" value="1"/>
</dbReference>
<sequence length="369" mass="41566">MDTLRYYLIPVVTACGLIGFYYGGYWVWLGAATFPALMVLDVILPKDFSARKVSPFFADLTQYLQLPLMIGLYGLLVFGVENGRIELSEPLQVAGCILSLAWLSGVPTLPVSHELMHRRHWLPRKMAQLLAMFYGDPNRDIAHVNTHHLYLDTPLDSDTPYRGQTIYSFVISATVGSVKDAIKIEAETLRRKGQSPWNLSNKTYQYVALLLALPGLVSYLGGPALGLVTIASMIIAKGIVEGFNYFQHYGLVRDLDQPILLHHAWNHMGTIVRPLGCEITNHINHHIDGYTRFYELRPEKEAPQMPSLFVCFLLGLIPPLWFALIAKPKLRDWDQRYATPGERELAMAANKKAGWPLWCESELGRVASI</sequence>
<accession>P21395</accession>
<reference key="1">
    <citation type="journal article" date="1991" name="J. Bacteriol.">
        <title>Primary structure of xylene monooxygenase: similarities to and differences from the alkane hydroxylation system.</title>
        <authorList>
            <person name="Suzuki M."/>
            <person name="Hayakawa T."/>
            <person name="Shaw J.P."/>
            <person name="Rekik M."/>
            <person name="Harayama S."/>
        </authorList>
    </citation>
    <scope>NUCLEOTIDE SEQUENCE [GENOMIC DNA]</scope>
    <scope>FUNCTION</scope>
</reference>
<reference key="2">
    <citation type="journal article" date="1992" name="FEMS Microbiol. Lett.">
        <title>Degradation of chlorotoluenes by in vivo constructed hybrid strains: problems of enzyme specificity, induction and prevention of meta-pathway.</title>
        <authorList>
            <person name="Brinkmann U."/>
            <person name="Reineke W."/>
        </authorList>
    </citation>
    <scope>FUNCTION</scope>
    <source>
        <strain>PaW1</strain>
    </source>
</reference>
<reference key="3">
    <citation type="journal article" date="1995" name="J. Ferment. Bioeng.">
        <title>Characterization in vitro of the hydroxylase component of xylene monooxygenase, the first enzyme of the TOL-plasmid-encoded pathway for the mineralization of toluene and xylenes.</title>
        <authorList>
            <person name="Shaw J.P."/>
            <person name="Harayama S."/>
        </authorList>
    </citation>
    <scope>FUNCTION</scope>
    <scope>CATALYTIC ACTIVITY</scope>
    <scope>COFACTOR</scope>
    <scope>BIOPHYSICOCHEMICAL PROPERTIES</scope>
    <scope>SUBCELLULAR LOCATION</scope>
    <source>
        <strain>PaW1</strain>
    </source>
</reference>
<comment type="function">
    <text evidence="3 4 5">Component of a monooxygenase that catalyzes the first step in the degradation of xylenes and toluenes (PubMed:1999388, Ref.3). XylM catalyzes the hydroxylation of the methyl side chain of xylenes and toluenes (Ref.3). The electrons are provided by the electron transfer component XylA (Ref.3). The best substrates are m-xylene and p-xylene, followed by toluene (Ref.3). Shows weak activity with o-xylene (Ref.3). In vitro, is also active with substituted compounds, such as chlorotoluenes (PubMed:1526468). Cannot use benzyl alcohol (Ref.3).</text>
</comment>
<comment type="catalytic activity">
    <reaction evidence="5">
        <text>m-xylene + 2 reduced [2Fe-2S]-[ferredoxin] + O2 + 2 H(+) = 3-methylbenzyl alcohol + 2 oxidized [2Fe-2S]-[ferredoxin] + H2O</text>
        <dbReference type="Rhea" id="RHEA:51600"/>
        <dbReference type="Rhea" id="RHEA-COMP:10000"/>
        <dbReference type="Rhea" id="RHEA-COMP:10001"/>
        <dbReference type="ChEBI" id="CHEBI:15377"/>
        <dbReference type="ChEBI" id="CHEBI:15378"/>
        <dbReference type="ChEBI" id="CHEBI:15379"/>
        <dbReference type="ChEBI" id="CHEBI:27995"/>
        <dbReference type="ChEBI" id="CHEBI:28488"/>
        <dbReference type="ChEBI" id="CHEBI:33737"/>
        <dbReference type="ChEBI" id="CHEBI:33738"/>
        <dbReference type="EC" id="1.14.15.26"/>
    </reaction>
    <physiologicalReaction direction="left-to-right" evidence="5">
        <dbReference type="Rhea" id="RHEA:51601"/>
    </physiologicalReaction>
</comment>
<comment type="catalytic activity">
    <reaction evidence="5">
        <text>p-xylene + 2 reduced [2Fe-2S]-[ferredoxin] + O2 + 2 H(+) = 4-methylbenzyl alcohol + 2 oxidized [2Fe-2S]-[ferredoxin] + H2O</text>
        <dbReference type="Rhea" id="RHEA:51596"/>
        <dbReference type="Rhea" id="RHEA-COMP:10000"/>
        <dbReference type="Rhea" id="RHEA-COMP:10001"/>
        <dbReference type="ChEBI" id="CHEBI:1895"/>
        <dbReference type="ChEBI" id="CHEBI:15377"/>
        <dbReference type="ChEBI" id="CHEBI:15378"/>
        <dbReference type="ChEBI" id="CHEBI:15379"/>
        <dbReference type="ChEBI" id="CHEBI:27417"/>
        <dbReference type="ChEBI" id="CHEBI:33737"/>
        <dbReference type="ChEBI" id="CHEBI:33738"/>
        <dbReference type="EC" id="1.14.15.26"/>
    </reaction>
    <physiologicalReaction direction="left-to-right" evidence="5">
        <dbReference type="Rhea" id="RHEA:51597"/>
    </physiologicalReaction>
</comment>
<comment type="catalytic activity">
    <reaction evidence="5">
        <text>toluene + 2 reduced [2Fe-2S]-[ferredoxin] + O2 + 2 H(+) = benzyl alcohol + 2 oxidized [2Fe-2S]-[ferredoxin] + H2O</text>
        <dbReference type="Rhea" id="RHEA:51592"/>
        <dbReference type="Rhea" id="RHEA-COMP:10000"/>
        <dbReference type="Rhea" id="RHEA-COMP:10001"/>
        <dbReference type="ChEBI" id="CHEBI:15377"/>
        <dbReference type="ChEBI" id="CHEBI:15378"/>
        <dbReference type="ChEBI" id="CHEBI:15379"/>
        <dbReference type="ChEBI" id="CHEBI:17578"/>
        <dbReference type="ChEBI" id="CHEBI:17987"/>
        <dbReference type="ChEBI" id="CHEBI:33737"/>
        <dbReference type="ChEBI" id="CHEBI:33738"/>
        <dbReference type="EC" id="1.14.15.26"/>
    </reaction>
    <physiologicalReaction direction="left-to-right" evidence="5">
        <dbReference type="Rhea" id="RHEA:51593"/>
    </physiologicalReaction>
</comment>
<comment type="cofactor">
    <cofactor evidence="5">
        <name>Fe(2+)</name>
        <dbReference type="ChEBI" id="CHEBI:29033"/>
    </cofactor>
    <text evidence="1">Binds 2 Fe(2+) ions per subunit.</text>
</comment>
<comment type="biophysicochemical properties">
    <phDependence>
        <text evidence="5">Optimum pH is 7.0.</text>
    </phDependence>
</comment>
<comment type="subunit">
    <text evidence="8 9">The xylene/toluene monooxygenase is composed of two subunits: the electron transfer component XylA and the hydroxylase component XylM.</text>
</comment>
<comment type="subcellular location">
    <subcellularLocation>
        <location evidence="5">Cell inner membrane</location>
        <topology evidence="2">Multi-pass membrane protein</topology>
    </subcellularLocation>
</comment>
<comment type="similarity">
    <text evidence="7">Belongs to the fatty acid desaturase type 1 family. AlkB subfamily.</text>
</comment>
<evidence type="ECO:0000250" key="1">
    <source>
        <dbReference type="UniProtKB" id="P12691"/>
    </source>
</evidence>
<evidence type="ECO:0000255" key="2"/>
<evidence type="ECO:0000269" key="3">
    <source>
    </source>
</evidence>
<evidence type="ECO:0000269" key="4">
    <source>
    </source>
</evidence>
<evidence type="ECO:0000269" key="5">
    <source ref="3"/>
</evidence>
<evidence type="ECO:0000303" key="6">
    <source>
    </source>
</evidence>
<evidence type="ECO:0000305" key="7"/>
<evidence type="ECO:0000305" key="8">
    <source>
    </source>
</evidence>
<evidence type="ECO:0000305" key="9">
    <source ref="3"/>
</evidence>
<geneLocation type="plasmid">
    <name>TOL pWW0</name>
</geneLocation>
<feature type="chain" id="PRO_0000185435" description="Xylene/toluene monooxygenase hydroxylase component XylM">
    <location>
        <begin position="1"/>
        <end position="369"/>
    </location>
</feature>
<feature type="transmembrane region" description="Helical" evidence="2">
    <location>
        <begin position="8"/>
        <end position="28"/>
    </location>
</feature>
<feature type="transmembrane region" description="Helical" evidence="2">
    <location>
        <begin position="60"/>
        <end position="80"/>
    </location>
</feature>
<feature type="transmembrane region" description="Helical" evidence="2">
    <location>
        <begin position="91"/>
        <end position="111"/>
    </location>
</feature>
<feature type="transmembrane region" description="Helical" evidence="2">
    <location>
        <begin position="207"/>
        <end position="227"/>
    </location>
</feature>
<feature type="transmembrane region" description="Helical" evidence="2">
    <location>
        <begin position="305"/>
        <end position="325"/>
    </location>
</feature>
<feature type="binding site" evidence="1">
    <location>
        <position position="113"/>
    </location>
    <ligand>
        <name>Fe cation</name>
        <dbReference type="ChEBI" id="CHEBI:24875"/>
        <label>1</label>
    </ligand>
</feature>
<feature type="binding site" evidence="1">
    <location>
        <position position="117"/>
    </location>
    <ligand>
        <name>Fe cation</name>
        <dbReference type="ChEBI" id="CHEBI:24875"/>
        <label>1</label>
    </ligand>
</feature>
<feature type="binding site" evidence="1">
    <location>
        <position position="143"/>
    </location>
    <ligand>
        <name>Fe cation</name>
        <dbReference type="ChEBI" id="CHEBI:24875"/>
        <label>1</label>
    </ligand>
</feature>
<feature type="binding site" evidence="1">
    <location>
        <position position="147"/>
    </location>
    <ligand>
        <name>Fe cation</name>
        <dbReference type="ChEBI" id="CHEBI:24875"/>
        <label>1</label>
    </ligand>
</feature>
<feature type="binding site" evidence="1">
    <location>
        <position position="148"/>
    </location>
    <ligand>
        <name>Fe cation</name>
        <dbReference type="ChEBI" id="CHEBI:24875"/>
        <label>2</label>
    </ligand>
</feature>
<feature type="binding site" evidence="1">
    <location>
        <position position="282"/>
    </location>
    <ligand>
        <name>Fe cation</name>
        <dbReference type="ChEBI" id="CHEBI:24875"/>
        <label>2</label>
    </ligand>
</feature>
<feature type="binding site" evidence="1">
    <location>
        <position position="285"/>
    </location>
    <ligand>
        <name>Fe cation</name>
        <dbReference type="ChEBI" id="CHEBI:24875"/>
        <label>2</label>
    </ligand>
</feature>
<feature type="binding site" evidence="1">
    <location>
        <position position="286"/>
    </location>
    <ligand>
        <name>Fe cation</name>
        <dbReference type="ChEBI" id="CHEBI:24875"/>
        <label>2</label>
    </ligand>
</feature>
<protein>
    <recommendedName>
        <fullName evidence="7">Xylene/toluene monooxygenase hydroxylase component XylM</fullName>
        <ecNumber evidence="5">1.14.15.26</ecNumber>
    </recommendedName>
    <alternativeName>
        <fullName evidence="7">Toluene methyl-monooxygenase</fullName>
    </alternativeName>
</protein>
<proteinExistence type="evidence at protein level"/>
<gene>
    <name evidence="6" type="primary">xylM</name>
</gene>
<organism>
    <name type="scientific">Pseudomonas putida</name>
    <name type="common">Arthrobacter siderocapsulatus</name>
    <dbReference type="NCBI Taxonomy" id="303"/>
    <lineage>
        <taxon>Bacteria</taxon>
        <taxon>Pseudomonadati</taxon>
        <taxon>Pseudomonadota</taxon>
        <taxon>Gammaproteobacteria</taxon>
        <taxon>Pseudomonadales</taxon>
        <taxon>Pseudomonadaceae</taxon>
        <taxon>Pseudomonas</taxon>
    </lineage>
</organism>
<name>XYLM_PSEPU</name>